<keyword id="KW-1003">Cell membrane</keyword>
<keyword id="KW-1015">Disulfide bond</keyword>
<keyword id="KW-0297">G-protein coupled receptor</keyword>
<keyword id="KW-0325">Glycoprotein</keyword>
<keyword id="KW-0472">Membrane</keyword>
<keyword id="KW-0552">Olfaction</keyword>
<keyword id="KW-0675">Receptor</keyword>
<keyword id="KW-1185">Reference proteome</keyword>
<keyword id="KW-0716">Sensory transduction</keyword>
<keyword id="KW-0807">Transducer</keyword>
<keyword id="KW-0812">Transmembrane</keyword>
<keyword id="KW-1133">Transmembrane helix</keyword>
<proteinExistence type="evidence at transcript level"/>
<dbReference type="EMBL" id="AJ459858">
    <property type="protein sequence ID" value="CAD31041.1"/>
    <property type="molecule type" value="mRNA"/>
</dbReference>
<dbReference type="EMBL" id="AL096770">
    <property type="protein sequence ID" value="CAB65796.1"/>
    <property type="molecule type" value="Genomic_DNA"/>
</dbReference>
<dbReference type="EMBL" id="AL662781">
    <property type="status" value="NOT_ANNOTATED_CDS"/>
    <property type="molecule type" value="Genomic_DNA"/>
</dbReference>
<dbReference type="EMBL" id="BC069082">
    <property type="protein sequence ID" value="AAH69082.1"/>
    <property type="molecule type" value="mRNA"/>
</dbReference>
<dbReference type="EMBL" id="BC069154">
    <property type="protein sequence ID" value="AAH69154.1"/>
    <property type="molecule type" value="mRNA"/>
</dbReference>
<dbReference type="EMBL" id="BC103892">
    <property type="protein sequence ID" value="AAI03893.1"/>
    <property type="molecule type" value="mRNA"/>
</dbReference>
<dbReference type="EMBL" id="BC106898">
    <property type="status" value="NOT_ANNOTATED_CDS"/>
    <property type="molecule type" value="mRNA"/>
</dbReference>
<dbReference type="EMBL" id="BK004439">
    <property type="protein sequence ID" value="DAA04837.1"/>
    <property type="molecule type" value="Genomic_DNA"/>
</dbReference>
<dbReference type="CCDS" id="CCDS4658.1"/>
<dbReference type="RefSeq" id="NP_112221.1">
    <property type="nucleotide sequence ID" value="NM_030959.3"/>
</dbReference>
<dbReference type="SMR" id="Q9UGF7"/>
<dbReference type="BioGRID" id="123588">
    <property type="interactions" value="6"/>
</dbReference>
<dbReference type="FunCoup" id="Q9UGF7">
    <property type="interactions" value="416"/>
</dbReference>
<dbReference type="IntAct" id="Q9UGF7">
    <property type="interactions" value="3"/>
</dbReference>
<dbReference type="STRING" id="9606.ENSP00000380023"/>
<dbReference type="GlyCosmos" id="Q9UGF7">
    <property type="glycosylation" value="1 site, No reported glycans"/>
</dbReference>
<dbReference type="GlyGen" id="Q9UGF7">
    <property type="glycosylation" value="2 sites"/>
</dbReference>
<dbReference type="BioMuta" id="OR12D3"/>
<dbReference type="DMDM" id="14423826"/>
<dbReference type="PaxDb" id="9606-ENSP00000380023"/>
<dbReference type="PeptideAtlas" id="Q9UGF7"/>
<dbReference type="Antibodypedia" id="35259">
    <property type="antibodies" value="88 antibodies from 21 providers"/>
</dbReference>
<dbReference type="DNASU" id="81797"/>
<dbReference type="Ensembl" id="ENST00000383556.7">
    <property type="protein sequence ID" value="ENSP00000373048.3"/>
    <property type="gene ID" value="ENSG00000204692.9"/>
</dbReference>
<dbReference type="Ensembl" id="ENST00000396806.3">
    <property type="protein sequence ID" value="ENSP00000380023.3"/>
    <property type="gene ID" value="ENSG00000112462.8"/>
</dbReference>
<dbReference type="Ensembl" id="ENST00000430148.5">
    <property type="protein sequence ID" value="ENSP00000393734.1"/>
    <property type="gene ID" value="ENSG00000224487.8"/>
</dbReference>
<dbReference type="Ensembl" id="ENST00000505384.5">
    <property type="protein sequence ID" value="ENSP00000421215.1"/>
    <property type="gene ID" value="ENSG00000242022.8"/>
</dbReference>
<dbReference type="Ensembl" id="ENST00000550681.1">
    <property type="protein sequence ID" value="ENSP00000449350.1"/>
    <property type="gene ID" value="ENSG00000204692.9"/>
</dbReference>
<dbReference type="Ensembl" id="ENST00000550913.1">
    <property type="protein sequence ID" value="ENSP00000447580.1"/>
    <property type="gene ID" value="ENSG00000224487.8"/>
</dbReference>
<dbReference type="Ensembl" id="ENST00000552446.1">
    <property type="protein sequence ID" value="ENSP00000447204.1"/>
    <property type="gene ID" value="ENSG00000242022.8"/>
</dbReference>
<dbReference type="GeneID" id="81797"/>
<dbReference type="KEGG" id="hsa:81797"/>
<dbReference type="MANE-Select" id="ENST00000396806.3">
    <property type="protein sequence ID" value="ENSP00000380023.3"/>
    <property type="RefSeq nucleotide sequence ID" value="NM_030959.3"/>
    <property type="RefSeq protein sequence ID" value="NP_112221.1"/>
</dbReference>
<dbReference type="UCSC" id="uc003nme.3">
    <property type="organism name" value="human"/>
</dbReference>
<dbReference type="AGR" id="HGNC:13963"/>
<dbReference type="CTD" id="81797"/>
<dbReference type="DisGeNET" id="81797"/>
<dbReference type="GeneCards" id="OR12D3"/>
<dbReference type="HGNC" id="HGNC:13963">
    <property type="gene designation" value="OR12D3"/>
</dbReference>
<dbReference type="HPA" id="ENSG00000112462">
    <property type="expression patterns" value="Not detected"/>
</dbReference>
<dbReference type="neXtProt" id="NX_Q9UGF7"/>
<dbReference type="OpenTargets" id="ENSG00000112462"/>
<dbReference type="PharmGKB" id="PA32029"/>
<dbReference type="VEuPathDB" id="HostDB:ENSG00000112462"/>
<dbReference type="eggNOG" id="ENOG502SJ1M">
    <property type="taxonomic scope" value="Eukaryota"/>
</dbReference>
<dbReference type="GeneTree" id="ENSGT00940000163236"/>
<dbReference type="HOGENOM" id="CLU_012526_1_2_1"/>
<dbReference type="InParanoid" id="Q9UGF7"/>
<dbReference type="OMA" id="MTQDRMV"/>
<dbReference type="OrthoDB" id="6145535at2759"/>
<dbReference type="PAN-GO" id="Q9UGF7">
    <property type="GO annotations" value="4 GO annotations based on evolutionary models"/>
</dbReference>
<dbReference type="PhylomeDB" id="Q9UGF7"/>
<dbReference type="TreeFam" id="TF338273"/>
<dbReference type="PathwayCommons" id="Q9UGF7"/>
<dbReference type="Reactome" id="R-HSA-9752946">
    <property type="pathway name" value="Expression and translocation of olfactory receptors"/>
</dbReference>
<dbReference type="BioGRID-ORCS" id="81797">
    <property type="hits" value="11 hits in 737 CRISPR screens"/>
</dbReference>
<dbReference type="GeneWiki" id="OR12D3"/>
<dbReference type="GenomeRNAi" id="81797"/>
<dbReference type="Pharos" id="Q9UGF7">
    <property type="development level" value="Tdark"/>
</dbReference>
<dbReference type="PRO" id="PR:Q9UGF7"/>
<dbReference type="Proteomes" id="UP000005640">
    <property type="component" value="Chromosome 6"/>
</dbReference>
<dbReference type="RNAct" id="Q9UGF7">
    <property type="molecule type" value="protein"/>
</dbReference>
<dbReference type="Bgee" id="ENSG00000112462">
    <property type="expression patterns" value="Expressed in male germ line stem cell (sensu Vertebrata) in testis"/>
</dbReference>
<dbReference type="ExpressionAtlas" id="Q9UGF7">
    <property type="expression patterns" value="differential"/>
</dbReference>
<dbReference type="GO" id="GO:0016020">
    <property type="term" value="C:membrane"/>
    <property type="evidence" value="ECO:0000318"/>
    <property type="project" value="GO_Central"/>
</dbReference>
<dbReference type="GO" id="GO:0005886">
    <property type="term" value="C:plasma membrane"/>
    <property type="evidence" value="ECO:0007669"/>
    <property type="project" value="UniProtKB-SubCell"/>
</dbReference>
<dbReference type="GO" id="GO:0004930">
    <property type="term" value="F:G protein-coupled receptor activity"/>
    <property type="evidence" value="ECO:0007669"/>
    <property type="project" value="UniProtKB-KW"/>
</dbReference>
<dbReference type="GO" id="GO:0005549">
    <property type="term" value="F:odorant binding"/>
    <property type="evidence" value="ECO:0000318"/>
    <property type="project" value="GO_Central"/>
</dbReference>
<dbReference type="GO" id="GO:0004984">
    <property type="term" value="F:olfactory receptor activity"/>
    <property type="evidence" value="ECO:0000318"/>
    <property type="project" value="GO_Central"/>
</dbReference>
<dbReference type="GO" id="GO:0050911">
    <property type="term" value="P:detection of chemical stimulus involved in sensory perception of smell"/>
    <property type="evidence" value="ECO:0000318"/>
    <property type="project" value="GO_Central"/>
</dbReference>
<dbReference type="CDD" id="cd15915">
    <property type="entry name" value="7tmA_OR12D-like"/>
    <property type="match status" value="1"/>
</dbReference>
<dbReference type="FunFam" id="1.20.1070.10:FF:000001">
    <property type="entry name" value="Olfactory receptor"/>
    <property type="match status" value="1"/>
</dbReference>
<dbReference type="Gene3D" id="1.20.1070.10">
    <property type="entry name" value="Rhodopsin 7-helix transmembrane proteins"/>
    <property type="match status" value="1"/>
</dbReference>
<dbReference type="InterPro" id="IPR000276">
    <property type="entry name" value="GPCR_Rhodpsn"/>
</dbReference>
<dbReference type="InterPro" id="IPR017452">
    <property type="entry name" value="GPCR_Rhodpsn_7TM"/>
</dbReference>
<dbReference type="InterPro" id="IPR000725">
    <property type="entry name" value="Olfact_rcpt"/>
</dbReference>
<dbReference type="InterPro" id="IPR050516">
    <property type="entry name" value="Olfactory_GPCR"/>
</dbReference>
<dbReference type="PANTHER" id="PTHR26452">
    <property type="entry name" value="OLFACTORY RECEPTOR"/>
    <property type="match status" value="1"/>
</dbReference>
<dbReference type="Pfam" id="PF13853">
    <property type="entry name" value="7tm_4"/>
    <property type="match status" value="1"/>
</dbReference>
<dbReference type="PRINTS" id="PR00237">
    <property type="entry name" value="GPCRRHODOPSN"/>
</dbReference>
<dbReference type="PRINTS" id="PR00245">
    <property type="entry name" value="OLFACTORYR"/>
</dbReference>
<dbReference type="SUPFAM" id="SSF81321">
    <property type="entry name" value="Family A G protein-coupled receptor-like"/>
    <property type="match status" value="1"/>
</dbReference>
<dbReference type="PROSITE" id="PS00237">
    <property type="entry name" value="G_PROTEIN_RECEP_F1_1"/>
    <property type="match status" value="1"/>
</dbReference>
<dbReference type="PROSITE" id="PS50262">
    <property type="entry name" value="G_PROTEIN_RECEP_F1_2"/>
    <property type="match status" value="1"/>
</dbReference>
<comment type="function">
    <text evidence="5">Odorant receptor.</text>
</comment>
<comment type="subcellular location">
    <subcellularLocation>
        <location>Cell membrane</location>
        <topology>Multi-pass membrane protein</topology>
    </subcellularLocation>
</comment>
<comment type="similarity">
    <text evidence="2">Belongs to the G-protein coupled receptor 1 family.</text>
</comment>
<comment type="online information" name="Human Olfactory Receptor Data Exploratorium (HORDE)">
    <link uri="http://genome.weizmann.ac.il/horde/card/index/symbol:OR12D3"/>
</comment>
<gene>
    <name type="primary">OR12D3</name>
</gene>
<protein>
    <recommendedName>
        <fullName>Olfactory receptor 12D3</fullName>
    </recommendedName>
    <alternativeName>
        <fullName>Hs6M1-27</fullName>
    </alternativeName>
    <alternativeName>
        <fullName>Olfactory receptor OR6-27</fullName>
    </alternativeName>
</protein>
<evidence type="ECO:0000255" key="1"/>
<evidence type="ECO:0000255" key="2">
    <source>
        <dbReference type="PROSITE-ProRule" id="PRU00521"/>
    </source>
</evidence>
<evidence type="ECO:0000269" key="3">
    <source>
    </source>
</evidence>
<evidence type="ECO:0000269" key="4">
    <source>
    </source>
</evidence>
<evidence type="ECO:0000305" key="5"/>
<sequence>MENVTTMNEFLLLGLTGVQELQPFFFGIFLIIYLINLIGNGSILVMVVLEPQLHSPMYFFLGNLSCLDISYSSVTLPKLLVNLVCSRRAISFLGCITQLHFFHFLGSTEAILLAIMAFDRFVAICNPLRYTVIMNPQVCILLAAAAWLISFFYALMHSVMTAHLSFCGSQKLNHFFYDVKPLLELACSDTLLNQWLLSIVTGSISMGAFFLTLLSCFYVIGFLLFKNRSCRILHKALSTCASHFMVVCLFYGPVGFTYIRPASATSMIQDRIMAIMYSAVTPVLNPLIYTLRNKEVMMALKKIFGRKLFKDWQQHH</sequence>
<feature type="chain" id="PRO_0000150729" description="Olfactory receptor 12D3">
    <location>
        <begin position="1"/>
        <end position="316"/>
    </location>
</feature>
<feature type="topological domain" description="Extracellular" evidence="1">
    <location>
        <begin position="1"/>
        <end position="23"/>
    </location>
</feature>
<feature type="transmembrane region" description="Helical; Name=1" evidence="1">
    <location>
        <begin position="24"/>
        <end position="44"/>
    </location>
</feature>
<feature type="topological domain" description="Cytoplasmic" evidence="1">
    <location>
        <begin position="45"/>
        <end position="52"/>
    </location>
</feature>
<feature type="transmembrane region" description="Helical; Name=2" evidence="1">
    <location>
        <begin position="53"/>
        <end position="73"/>
    </location>
</feature>
<feature type="topological domain" description="Extracellular" evidence="1">
    <location>
        <begin position="74"/>
        <end position="97"/>
    </location>
</feature>
<feature type="transmembrane region" description="Helical; Name=3" evidence="1">
    <location>
        <begin position="98"/>
        <end position="118"/>
    </location>
</feature>
<feature type="topological domain" description="Cytoplasmic" evidence="1">
    <location>
        <begin position="119"/>
        <end position="137"/>
    </location>
</feature>
<feature type="transmembrane region" description="Helical; Name=4" evidence="1">
    <location>
        <begin position="138"/>
        <end position="158"/>
    </location>
</feature>
<feature type="topological domain" description="Extracellular" evidence="1">
    <location>
        <begin position="159"/>
        <end position="195"/>
    </location>
</feature>
<feature type="transmembrane region" description="Helical; Name=5" evidence="1">
    <location>
        <begin position="196"/>
        <end position="215"/>
    </location>
</feature>
<feature type="topological domain" description="Cytoplasmic" evidence="1">
    <location>
        <begin position="216"/>
        <end position="236"/>
    </location>
</feature>
<feature type="transmembrane region" description="Helical; Name=6" evidence="1">
    <location>
        <begin position="237"/>
        <end position="257"/>
    </location>
</feature>
<feature type="topological domain" description="Extracellular" evidence="1">
    <location>
        <begin position="258"/>
        <end position="270"/>
    </location>
</feature>
<feature type="transmembrane region" description="Helical; Name=7" evidence="1">
    <location>
        <begin position="271"/>
        <end position="291"/>
    </location>
</feature>
<feature type="topological domain" description="Cytoplasmic" evidence="1">
    <location>
        <begin position="292"/>
        <end position="316"/>
    </location>
</feature>
<feature type="glycosylation site" description="N-linked (GlcNAc...) asparagine" evidence="1">
    <location>
        <position position="3"/>
    </location>
</feature>
<feature type="disulfide bond" evidence="2">
    <location>
        <begin position="95"/>
        <end position="187"/>
    </location>
</feature>
<feature type="sequence variant" id="VAR_020383" description="In dbSNP:rs3749971." evidence="3">
    <original>T</original>
    <variation>I</variation>
    <location>
        <position position="97"/>
    </location>
</feature>
<feature type="sequence variant" id="VAR_036209" description="In a breast cancer sample; somatic mutation; dbSNP:rs545611345." evidence="4">
    <original>F</original>
    <variation>L</variation>
    <location>
        <position position="250"/>
    </location>
</feature>
<feature type="sequence variant" id="VAR_053298" description="In dbSNP:rs9380122.">
    <original>Y</original>
    <variation>H</variation>
    <location>
        <position position="277"/>
    </location>
</feature>
<name>O12D3_HUMAN</name>
<organism>
    <name type="scientific">Homo sapiens</name>
    <name type="common">Human</name>
    <dbReference type="NCBI Taxonomy" id="9606"/>
    <lineage>
        <taxon>Eukaryota</taxon>
        <taxon>Metazoa</taxon>
        <taxon>Chordata</taxon>
        <taxon>Craniata</taxon>
        <taxon>Vertebrata</taxon>
        <taxon>Euteleostomi</taxon>
        <taxon>Mammalia</taxon>
        <taxon>Eutheria</taxon>
        <taxon>Euarchontoglires</taxon>
        <taxon>Primates</taxon>
        <taxon>Haplorrhini</taxon>
        <taxon>Catarrhini</taxon>
        <taxon>Hominidae</taxon>
        <taxon>Homo</taxon>
    </lineage>
</organism>
<reference key="1">
    <citation type="journal article" date="2003" name="J. Biol. Chem.">
        <title>Complex transcription and splicing of odorant receptor genes.</title>
        <authorList>
            <person name="Volz A."/>
            <person name="Ehlers A."/>
            <person name="Younger R."/>
            <person name="Forbes S."/>
            <person name="Trowsdale J."/>
            <person name="Schnorr D."/>
            <person name="Beck S."/>
            <person name="Ziegler A."/>
        </authorList>
    </citation>
    <scope>NUCLEOTIDE SEQUENCE [MRNA]</scope>
    <source>
        <tissue>Testis</tissue>
    </source>
</reference>
<reference key="2">
    <citation type="journal article" date="2003" name="Nature">
        <title>The DNA sequence and analysis of human chromosome 6.</title>
        <authorList>
            <person name="Mungall A.J."/>
            <person name="Palmer S.A."/>
            <person name="Sims S.K."/>
            <person name="Edwards C.A."/>
            <person name="Ashurst J.L."/>
            <person name="Wilming L."/>
            <person name="Jones M.C."/>
            <person name="Horton R."/>
            <person name="Hunt S.E."/>
            <person name="Scott C.E."/>
            <person name="Gilbert J.G.R."/>
            <person name="Clamp M.E."/>
            <person name="Bethel G."/>
            <person name="Milne S."/>
            <person name="Ainscough R."/>
            <person name="Almeida J.P."/>
            <person name="Ambrose K.D."/>
            <person name="Andrews T.D."/>
            <person name="Ashwell R.I.S."/>
            <person name="Babbage A.K."/>
            <person name="Bagguley C.L."/>
            <person name="Bailey J."/>
            <person name="Banerjee R."/>
            <person name="Barker D.J."/>
            <person name="Barlow K.F."/>
            <person name="Bates K."/>
            <person name="Beare D.M."/>
            <person name="Beasley H."/>
            <person name="Beasley O."/>
            <person name="Bird C.P."/>
            <person name="Blakey S.E."/>
            <person name="Bray-Allen S."/>
            <person name="Brook J."/>
            <person name="Brown A.J."/>
            <person name="Brown J.Y."/>
            <person name="Burford D.C."/>
            <person name="Burrill W."/>
            <person name="Burton J."/>
            <person name="Carder C."/>
            <person name="Carter N.P."/>
            <person name="Chapman J.C."/>
            <person name="Clark S.Y."/>
            <person name="Clark G."/>
            <person name="Clee C.M."/>
            <person name="Clegg S."/>
            <person name="Cobley V."/>
            <person name="Collier R.E."/>
            <person name="Collins J.E."/>
            <person name="Colman L.K."/>
            <person name="Corby N.R."/>
            <person name="Coville G.J."/>
            <person name="Culley K.M."/>
            <person name="Dhami P."/>
            <person name="Davies J."/>
            <person name="Dunn M."/>
            <person name="Earthrowl M.E."/>
            <person name="Ellington A.E."/>
            <person name="Evans K.A."/>
            <person name="Faulkner L."/>
            <person name="Francis M.D."/>
            <person name="Frankish A."/>
            <person name="Frankland J."/>
            <person name="French L."/>
            <person name="Garner P."/>
            <person name="Garnett J."/>
            <person name="Ghori M.J."/>
            <person name="Gilby L.M."/>
            <person name="Gillson C.J."/>
            <person name="Glithero R.J."/>
            <person name="Grafham D.V."/>
            <person name="Grant M."/>
            <person name="Gribble S."/>
            <person name="Griffiths C."/>
            <person name="Griffiths M.N.D."/>
            <person name="Hall R."/>
            <person name="Halls K.S."/>
            <person name="Hammond S."/>
            <person name="Harley J.L."/>
            <person name="Hart E.A."/>
            <person name="Heath P.D."/>
            <person name="Heathcott R."/>
            <person name="Holmes S.J."/>
            <person name="Howden P.J."/>
            <person name="Howe K.L."/>
            <person name="Howell G.R."/>
            <person name="Huckle E."/>
            <person name="Humphray S.J."/>
            <person name="Humphries M.D."/>
            <person name="Hunt A.R."/>
            <person name="Johnson C.M."/>
            <person name="Joy A.A."/>
            <person name="Kay M."/>
            <person name="Keenan S.J."/>
            <person name="Kimberley A.M."/>
            <person name="King A."/>
            <person name="Laird G.K."/>
            <person name="Langford C."/>
            <person name="Lawlor S."/>
            <person name="Leongamornlert D.A."/>
            <person name="Leversha M."/>
            <person name="Lloyd C.R."/>
            <person name="Lloyd D.M."/>
            <person name="Loveland J.E."/>
            <person name="Lovell J."/>
            <person name="Martin S."/>
            <person name="Mashreghi-Mohammadi M."/>
            <person name="Maslen G.L."/>
            <person name="Matthews L."/>
            <person name="McCann O.T."/>
            <person name="McLaren S.J."/>
            <person name="McLay K."/>
            <person name="McMurray A."/>
            <person name="Moore M.J.F."/>
            <person name="Mullikin J.C."/>
            <person name="Niblett D."/>
            <person name="Nickerson T."/>
            <person name="Novik K.L."/>
            <person name="Oliver K."/>
            <person name="Overton-Larty E.K."/>
            <person name="Parker A."/>
            <person name="Patel R."/>
            <person name="Pearce A.V."/>
            <person name="Peck A.I."/>
            <person name="Phillimore B.J.C.T."/>
            <person name="Phillips S."/>
            <person name="Plumb R.W."/>
            <person name="Porter K.M."/>
            <person name="Ramsey Y."/>
            <person name="Ranby S.A."/>
            <person name="Rice C.M."/>
            <person name="Ross M.T."/>
            <person name="Searle S.M."/>
            <person name="Sehra H.K."/>
            <person name="Sheridan E."/>
            <person name="Skuce C.D."/>
            <person name="Smith S."/>
            <person name="Smith M."/>
            <person name="Spraggon L."/>
            <person name="Squares S.L."/>
            <person name="Steward C.A."/>
            <person name="Sycamore N."/>
            <person name="Tamlyn-Hall G."/>
            <person name="Tester J."/>
            <person name="Theaker A.J."/>
            <person name="Thomas D.W."/>
            <person name="Thorpe A."/>
            <person name="Tracey A."/>
            <person name="Tromans A."/>
            <person name="Tubby B."/>
            <person name="Wall M."/>
            <person name="Wallis J.M."/>
            <person name="West A.P."/>
            <person name="White S.S."/>
            <person name="Whitehead S.L."/>
            <person name="Whittaker H."/>
            <person name="Wild A."/>
            <person name="Willey D.J."/>
            <person name="Wilmer T.E."/>
            <person name="Wood J.M."/>
            <person name="Wray P.W."/>
            <person name="Wyatt J.C."/>
            <person name="Young L."/>
            <person name="Younger R.M."/>
            <person name="Bentley D.R."/>
            <person name="Coulson A."/>
            <person name="Durbin R.M."/>
            <person name="Hubbard T."/>
            <person name="Sulston J.E."/>
            <person name="Dunham I."/>
            <person name="Rogers J."/>
            <person name="Beck S."/>
        </authorList>
    </citation>
    <scope>NUCLEOTIDE SEQUENCE [LARGE SCALE GENOMIC DNA]</scope>
    <scope>VARIANT ILE-97</scope>
</reference>
<reference key="3">
    <citation type="journal article" date="2004" name="Genome Res.">
        <title>The status, quality, and expansion of the NIH full-length cDNA project: the Mammalian Gene Collection (MGC).</title>
        <authorList>
            <consortium name="The MGC Project Team"/>
        </authorList>
    </citation>
    <scope>NUCLEOTIDE SEQUENCE [LARGE SCALE MRNA]</scope>
</reference>
<reference key="4">
    <citation type="journal article" date="2004" name="Proc. Natl. Acad. Sci. U.S.A.">
        <title>The human olfactory receptor gene family.</title>
        <authorList>
            <person name="Malnic B."/>
            <person name="Godfrey P.A."/>
            <person name="Buck L.B."/>
        </authorList>
    </citation>
    <scope>IDENTIFICATION</scope>
</reference>
<reference key="5">
    <citation type="journal article" date="2004" name="Proc. Natl. Acad. Sci. U.S.A.">
        <authorList>
            <person name="Malnic B."/>
            <person name="Godfrey P.A."/>
            <person name="Buck L.B."/>
        </authorList>
    </citation>
    <scope>ERRATUM OF PUBMED:14983052</scope>
</reference>
<reference key="6">
    <citation type="journal article" date="2006" name="Science">
        <title>The consensus coding sequences of human breast and colorectal cancers.</title>
        <authorList>
            <person name="Sjoeblom T."/>
            <person name="Jones S."/>
            <person name="Wood L.D."/>
            <person name="Parsons D.W."/>
            <person name="Lin J."/>
            <person name="Barber T.D."/>
            <person name="Mandelker D."/>
            <person name="Leary R.J."/>
            <person name="Ptak J."/>
            <person name="Silliman N."/>
            <person name="Szabo S."/>
            <person name="Buckhaults P."/>
            <person name="Farrell C."/>
            <person name="Meeh P."/>
            <person name="Markowitz S.D."/>
            <person name="Willis J."/>
            <person name="Dawson D."/>
            <person name="Willson J.K.V."/>
            <person name="Gazdar A.F."/>
            <person name="Hartigan J."/>
            <person name="Wu L."/>
            <person name="Liu C."/>
            <person name="Parmigiani G."/>
            <person name="Park B.H."/>
            <person name="Bachman K.E."/>
            <person name="Papadopoulos N."/>
            <person name="Vogelstein B."/>
            <person name="Kinzler K.W."/>
            <person name="Velculescu V.E."/>
        </authorList>
    </citation>
    <scope>VARIANT [LARGE SCALE ANALYSIS] LEU-250</scope>
</reference>
<accession>Q9UGF7</accession>
<accession>A2BDZ1</accession>
<accession>Q5SQI8</accession>
<accession>Q6IF23</accession>